<sequence>MKQYLELCQRIIDEGTWVENSRTGKRCLTVINADLVYHVDKNEFPLITTRKSFWKAAIAEMLGYIRGYDNAADFRNIGAKTWDANANDNQAWLNNPHRKGADDMGRVYGVQGRGWSKPDGGSIDQLRKIVDNLSKGIDDRGEILSFYNPGEFHMGCLRPCMHTHNFSLLGDTLHLTSFQRSCDVPLGLNFNQVQVFTLLALIAQITGHKAGTAYHKIVNAHIYEDQLELMQSVQLKRSPFPSPQLSINPDIKSLEDLETWVTMDDFEVTGYEHHEGIRYPFSV</sequence>
<proteinExistence type="inferred from homology"/>
<name>TYSY_SHEPW</name>
<organism>
    <name type="scientific">Shewanella piezotolerans (strain WP3 / JCM 13877)</name>
    <dbReference type="NCBI Taxonomy" id="225849"/>
    <lineage>
        <taxon>Bacteria</taxon>
        <taxon>Pseudomonadati</taxon>
        <taxon>Pseudomonadota</taxon>
        <taxon>Gammaproteobacteria</taxon>
        <taxon>Alteromonadales</taxon>
        <taxon>Shewanellaceae</taxon>
        <taxon>Shewanella</taxon>
    </lineage>
</organism>
<reference key="1">
    <citation type="journal article" date="2008" name="PLoS ONE">
        <title>Environmental adaptation: genomic analysis of the piezotolerant and psychrotolerant deep-sea iron reducing bacterium Shewanella piezotolerans WP3.</title>
        <authorList>
            <person name="Wang F."/>
            <person name="Wang J."/>
            <person name="Jian H."/>
            <person name="Zhang B."/>
            <person name="Li S."/>
            <person name="Wang F."/>
            <person name="Zeng X."/>
            <person name="Gao L."/>
            <person name="Bartlett D.H."/>
            <person name="Yu J."/>
            <person name="Hu S."/>
            <person name="Xiao X."/>
        </authorList>
    </citation>
    <scope>NUCLEOTIDE SEQUENCE [LARGE SCALE GENOMIC DNA]</scope>
    <source>
        <strain>WP3 / JCM 13877</strain>
    </source>
</reference>
<keyword id="KW-0963">Cytoplasm</keyword>
<keyword id="KW-0489">Methyltransferase</keyword>
<keyword id="KW-0545">Nucleotide biosynthesis</keyword>
<keyword id="KW-0808">Transferase</keyword>
<comment type="function">
    <text evidence="1">Catalyzes the reductive methylation of 2'-deoxyuridine-5'-monophosphate (dUMP) to 2'-deoxythymidine-5'-monophosphate (dTMP) while utilizing 5,10-methylenetetrahydrofolate (mTHF) as the methyl donor and reductant in the reaction, yielding dihydrofolate (DHF) as a by-product. This enzymatic reaction provides an intracellular de novo source of dTMP, an essential precursor for DNA biosynthesis.</text>
</comment>
<comment type="catalytic activity">
    <reaction evidence="1">
        <text>dUMP + (6R)-5,10-methylene-5,6,7,8-tetrahydrofolate = 7,8-dihydrofolate + dTMP</text>
        <dbReference type="Rhea" id="RHEA:12104"/>
        <dbReference type="ChEBI" id="CHEBI:15636"/>
        <dbReference type="ChEBI" id="CHEBI:57451"/>
        <dbReference type="ChEBI" id="CHEBI:63528"/>
        <dbReference type="ChEBI" id="CHEBI:246422"/>
        <dbReference type="EC" id="2.1.1.45"/>
    </reaction>
</comment>
<comment type="pathway">
    <text evidence="1">Pyrimidine metabolism; dTTP biosynthesis.</text>
</comment>
<comment type="subunit">
    <text evidence="1">Homodimer.</text>
</comment>
<comment type="subcellular location">
    <subcellularLocation>
        <location evidence="1">Cytoplasm</location>
    </subcellularLocation>
</comment>
<comment type="similarity">
    <text evidence="1">Belongs to the thymidylate synthase family. Bacterial-type ThyA subfamily.</text>
</comment>
<accession>B8CQK7</accession>
<dbReference type="EC" id="2.1.1.45" evidence="1"/>
<dbReference type="EMBL" id="CP000472">
    <property type="protein sequence ID" value="ACJ30473.1"/>
    <property type="molecule type" value="Genomic_DNA"/>
</dbReference>
<dbReference type="RefSeq" id="WP_020913816.1">
    <property type="nucleotide sequence ID" value="NC_011566.1"/>
</dbReference>
<dbReference type="SMR" id="B8CQK7"/>
<dbReference type="STRING" id="225849.swp_3793"/>
<dbReference type="KEGG" id="swp:swp_3793"/>
<dbReference type="eggNOG" id="COG0207">
    <property type="taxonomic scope" value="Bacteria"/>
</dbReference>
<dbReference type="HOGENOM" id="CLU_021669_0_1_6"/>
<dbReference type="OrthoDB" id="9774633at2"/>
<dbReference type="UniPathway" id="UPA00575"/>
<dbReference type="Proteomes" id="UP000000753">
    <property type="component" value="Chromosome"/>
</dbReference>
<dbReference type="GO" id="GO:0005829">
    <property type="term" value="C:cytosol"/>
    <property type="evidence" value="ECO:0007669"/>
    <property type="project" value="TreeGrafter"/>
</dbReference>
<dbReference type="GO" id="GO:0004799">
    <property type="term" value="F:thymidylate synthase activity"/>
    <property type="evidence" value="ECO:0007669"/>
    <property type="project" value="UniProtKB-UniRule"/>
</dbReference>
<dbReference type="GO" id="GO:0006231">
    <property type="term" value="P:dTMP biosynthetic process"/>
    <property type="evidence" value="ECO:0007669"/>
    <property type="project" value="UniProtKB-UniRule"/>
</dbReference>
<dbReference type="GO" id="GO:0006235">
    <property type="term" value="P:dTTP biosynthetic process"/>
    <property type="evidence" value="ECO:0007669"/>
    <property type="project" value="UniProtKB-UniRule"/>
</dbReference>
<dbReference type="GO" id="GO:0032259">
    <property type="term" value="P:methylation"/>
    <property type="evidence" value="ECO:0007669"/>
    <property type="project" value="UniProtKB-KW"/>
</dbReference>
<dbReference type="CDD" id="cd00351">
    <property type="entry name" value="TS_Pyrimidine_HMase"/>
    <property type="match status" value="1"/>
</dbReference>
<dbReference type="Gene3D" id="3.30.572.10">
    <property type="entry name" value="Thymidylate synthase/dCMP hydroxymethylase domain"/>
    <property type="match status" value="1"/>
</dbReference>
<dbReference type="HAMAP" id="MF_00008">
    <property type="entry name" value="Thymidy_synth_bact"/>
    <property type="match status" value="1"/>
</dbReference>
<dbReference type="InterPro" id="IPR045097">
    <property type="entry name" value="Thymidate_synth/dCMP_Mease"/>
</dbReference>
<dbReference type="InterPro" id="IPR023451">
    <property type="entry name" value="Thymidate_synth/dCMP_Mease_dom"/>
</dbReference>
<dbReference type="InterPro" id="IPR036926">
    <property type="entry name" value="Thymidate_synth/dCMP_Mease_sf"/>
</dbReference>
<dbReference type="InterPro" id="IPR000398">
    <property type="entry name" value="Thymidylate_synthase"/>
</dbReference>
<dbReference type="NCBIfam" id="NF002498">
    <property type="entry name" value="PRK01827.1-4"/>
    <property type="match status" value="1"/>
</dbReference>
<dbReference type="NCBIfam" id="TIGR03284">
    <property type="entry name" value="thym_sym"/>
    <property type="match status" value="1"/>
</dbReference>
<dbReference type="PANTHER" id="PTHR11548:SF9">
    <property type="entry name" value="THYMIDYLATE SYNTHASE"/>
    <property type="match status" value="1"/>
</dbReference>
<dbReference type="PANTHER" id="PTHR11548">
    <property type="entry name" value="THYMIDYLATE SYNTHASE 1"/>
    <property type="match status" value="1"/>
</dbReference>
<dbReference type="Pfam" id="PF00303">
    <property type="entry name" value="Thymidylat_synt"/>
    <property type="match status" value="1"/>
</dbReference>
<dbReference type="PRINTS" id="PR00108">
    <property type="entry name" value="THYMDSNTHASE"/>
</dbReference>
<dbReference type="SUPFAM" id="SSF55831">
    <property type="entry name" value="Thymidylate synthase/dCMP hydroxymethylase"/>
    <property type="match status" value="1"/>
</dbReference>
<evidence type="ECO:0000255" key="1">
    <source>
        <dbReference type="HAMAP-Rule" id="MF_00008"/>
    </source>
</evidence>
<feature type="chain" id="PRO_1000197260" description="Thymidylate synthase">
    <location>
        <begin position="1"/>
        <end position="283"/>
    </location>
</feature>
<feature type="active site" description="Nucleophile" evidence="1">
    <location>
        <position position="160"/>
    </location>
</feature>
<feature type="binding site" evidence="1">
    <location>
        <position position="22"/>
    </location>
    <ligand>
        <name>dUMP</name>
        <dbReference type="ChEBI" id="CHEBI:246422"/>
    </ligand>
</feature>
<feature type="binding site" evidence="1">
    <location>
        <begin position="180"/>
        <end position="183"/>
    </location>
    <ligand>
        <name>dUMP</name>
        <dbReference type="ChEBI" id="CHEBI:246422"/>
    </ligand>
</feature>
<feature type="binding site" evidence="1">
    <location>
        <position position="183"/>
    </location>
    <ligand>
        <name>(6R)-5,10-methylene-5,6,7,8-tetrahydrofolate</name>
        <dbReference type="ChEBI" id="CHEBI:15636"/>
    </ligand>
</feature>
<feature type="binding site" evidence="1">
    <location>
        <position position="191"/>
    </location>
    <ligand>
        <name>dUMP</name>
        <dbReference type="ChEBI" id="CHEBI:246422"/>
    </ligand>
</feature>
<feature type="binding site" evidence="1">
    <location>
        <begin position="221"/>
        <end position="223"/>
    </location>
    <ligand>
        <name>dUMP</name>
        <dbReference type="ChEBI" id="CHEBI:246422"/>
    </ligand>
</feature>
<feature type="binding site" evidence="1">
    <location>
        <position position="282"/>
    </location>
    <ligand>
        <name>(6R)-5,10-methylene-5,6,7,8-tetrahydrofolate</name>
        <dbReference type="ChEBI" id="CHEBI:15636"/>
    </ligand>
</feature>
<gene>
    <name evidence="1" type="primary">thyA</name>
    <name type="ordered locus">swp_3793</name>
</gene>
<protein>
    <recommendedName>
        <fullName evidence="1">Thymidylate synthase</fullName>
        <shortName evidence="1">TS</shortName>
        <shortName evidence="1">TSase</shortName>
        <ecNumber evidence="1">2.1.1.45</ecNumber>
    </recommendedName>
</protein>